<dbReference type="EMBL" id="X77131">
    <property type="protein sequence ID" value="CAA54387.1"/>
    <property type="molecule type" value="Genomic_DNA"/>
</dbReference>
<dbReference type="EMBL" id="AE004091">
    <property type="protein sequence ID" value="AAG06574.1"/>
    <property type="molecule type" value="Genomic_DNA"/>
</dbReference>
<dbReference type="PIR" id="S42207">
    <property type="entry name" value="S42207"/>
</dbReference>
<dbReference type="RefSeq" id="NP_251876.1">
    <property type="nucleotide sequence ID" value="NC_002516.2"/>
</dbReference>
<dbReference type="RefSeq" id="WP_003116413.1">
    <property type="nucleotide sequence ID" value="NZ_JASSSF010000001.1"/>
</dbReference>
<dbReference type="SMR" id="Q51485"/>
<dbReference type="STRING" id="208964.PA3186"/>
<dbReference type="TCDB" id="1.B.19.1.1">
    <property type="family name" value="the glucose-selective oprb porin (oprb) family"/>
</dbReference>
<dbReference type="PaxDb" id="208964-PA3186"/>
<dbReference type="GeneID" id="882788"/>
<dbReference type="KEGG" id="pae:PA3186"/>
<dbReference type="PATRIC" id="fig|208964.12.peg.3331"/>
<dbReference type="PseudoCAP" id="PA3186"/>
<dbReference type="HOGENOM" id="CLU_029684_1_0_6"/>
<dbReference type="InParanoid" id="Q51485"/>
<dbReference type="OrthoDB" id="545475at2"/>
<dbReference type="PhylomeDB" id="Q51485"/>
<dbReference type="BioCyc" id="PAER208964:G1FZ6-3246-MONOMER"/>
<dbReference type="Proteomes" id="UP000002438">
    <property type="component" value="Chromosome"/>
</dbReference>
<dbReference type="GO" id="GO:0009279">
    <property type="term" value="C:cell outer membrane"/>
    <property type="evidence" value="ECO:0007669"/>
    <property type="project" value="UniProtKB-SubCell"/>
</dbReference>
<dbReference type="GO" id="GO:0046930">
    <property type="term" value="C:pore complex"/>
    <property type="evidence" value="ECO:0007669"/>
    <property type="project" value="UniProtKB-KW"/>
</dbReference>
<dbReference type="GO" id="GO:0015288">
    <property type="term" value="F:porin activity"/>
    <property type="evidence" value="ECO:0007669"/>
    <property type="project" value="UniProtKB-KW"/>
</dbReference>
<dbReference type="GO" id="GO:0008643">
    <property type="term" value="P:carbohydrate transport"/>
    <property type="evidence" value="ECO:0000314"/>
    <property type="project" value="PseudoCAP"/>
</dbReference>
<dbReference type="GO" id="GO:0006811">
    <property type="term" value="P:monoatomic ion transport"/>
    <property type="evidence" value="ECO:0007669"/>
    <property type="project" value="UniProtKB-KW"/>
</dbReference>
<dbReference type="FunFam" id="2.40.160.180:FF:000004">
    <property type="entry name" value="Porin"/>
    <property type="match status" value="1"/>
</dbReference>
<dbReference type="Gene3D" id="2.40.160.180">
    <property type="entry name" value="Carbohydrate-selective porin OprB"/>
    <property type="match status" value="1"/>
</dbReference>
<dbReference type="InterPro" id="IPR007049">
    <property type="entry name" value="Carb-sel_porin_OprB"/>
</dbReference>
<dbReference type="InterPro" id="IPR052932">
    <property type="entry name" value="OprB_Porin"/>
</dbReference>
<dbReference type="InterPro" id="IPR038673">
    <property type="entry name" value="OprB_sf"/>
</dbReference>
<dbReference type="PANTHER" id="PTHR37944">
    <property type="entry name" value="PORIN B"/>
    <property type="match status" value="1"/>
</dbReference>
<dbReference type="PANTHER" id="PTHR37944:SF1">
    <property type="entry name" value="PORIN B"/>
    <property type="match status" value="1"/>
</dbReference>
<dbReference type="Pfam" id="PF04966">
    <property type="entry name" value="OprB"/>
    <property type="match status" value="1"/>
</dbReference>
<reference key="1">
    <citation type="journal article" date="1994" name="Eur. J. Biochem.">
        <title>Cloning and nucleotide sequence of the Pseudomonas aeruginosa glucose-selective OprB porin gene and distribution of OprB within the family Pseudomonadaceae.</title>
        <authorList>
            <person name="Wylie J.L."/>
            <person name="Worobec E.A."/>
        </authorList>
    </citation>
    <scope>NUCLEOTIDE SEQUENCE [GENOMIC DNA]</scope>
    <source>
        <strain>ATCC 15692 / PAO1 / H103</strain>
    </source>
</reference>
<reference key="2">
    <citation type="journal article" date="2000" name="Nature">
        <title>Complete genome sequence of Pseudomonas aeruginosa PAO1, an opportunistic pathogen.</title>
        <authorList>
            <person name="Stover C.K."/>
            <person name="Pham X.-Q.T."/>
            <person name="Erwin A.L."/>
            <person name="Mizoguchi S.D."/>
            <person name="Warrener P."/>
            <person name="Hickey M.J."/>
            <person name="Brinkman F.S.L."/>
            <person name="Hufnagle W.O."/>
            <person name="Kowalik D.J."/>
            <person name="Lagrou M."/>
            <person name="Garber R.L."/>
            <person name="Goltry L."/>
            <person name="Tolentino E."/>
            <person name="Westbrock-Wadman S."/>
            <person name="Yuan Y."/>
            <person name="Brody L.L."/>
            <person name="Coulter S.N."/>
            <person name="Folger K.R."/>
            <person name="Kas A."/>
            <person name="Larbig K."/>
            <person name="Lim R.M."/>
            <person name="Smith K.A."/>
            <person name="Spencer D.H."/>
            <person name="Wong G.K.-S."/>
            <person name="Wu Z."/>
            <person name="Paulsen I.T."/>
            <person name="Reizer J."/>
            <person name="Saier M.H. Jr."/>
            <person name="Hancock R.E.W."/>
            <person name="Lory S."/>
            <person name="Olson M.V."/>
        </authorList>
    </citation>
    <scope>NUCLEOTIDE SEQUENCE [LARGE SCALE GENOMIC DNA]</scope>
    <source>
        <strain>ATCC 15692 / DSM 22644 / CIP 104116 / JCM 14847 / LMG 12228 / 1C / PRS 101 / PAO1</strain>
    </source>
</reference>
<reference key="3">
    <citation type="journal article" date="1988" name="Biochim. Biophys. Acta">
        <title>Specificity of the glucose channel formed by protein D1 of Pseudomonas aeruginosa.</title>
        <authorList>
            <person name="Trias J."/>
            <person name="Rosenberg E.Y."/>
            <person name="Nikaido H."/>
        </authorList>
    </citation>
    <scope>CHARACTERIZATION</scope>
    <source>
        <strain>ATCC 15692 / DSM 22644 / CIP 104116 / JCM 14847 / LMG 12228 / 1C / PRS 101 / PAO1</strain>
    </source>
</reference>
<reference key="4">
    <citation type="journal article" date="1993" name="J. Bioenerg. Biomembr.">
        <title>Biophysical characterization of OprB, a glucose-inducible porin of Pseudomonas aeruginosa.</title>
        <authorList>
            <person name="Wylie J.L."/>
            <person name="Bernegger-Egli C."/>
            <person name="O'Neil J.D."/>
            <person name="Worobec E.A."/>
        </authorList>
    </citation>
    <scope>CHARACTERIZATION</scope>
    <scope>PROTEIN SEQUENCE OF 32-48</scope>
    <source>
        <strain>H673</strain>
    </source>
</reference>
<reference key="5">
    <citation type="journal article" date="1995" name="J. Bacteriol.">
        <title>The OprB porin plays a central role in carbohydrate uptake in Pseudomonas aeruginosa.</title>
        <authorList>
            <person name="Wylie J.L."/>
            <person name="Worobec E.A."/>
        </authorList>
    </citation>
    <scope>CHARACTERIZATION</scope>
    <source>
        <strain>ATCC 15692 / PAO1 / H103</strain>
    </source>
</reference>
<accession>Q51485</accession>
<accession>Q9R4Z9</accession>
<comment type="function">
    <text>Substrate-selective channel for a variety of different sugars. Could potentially facilitate the diffusion of diverse compounds, dependent on the presence of a hydroxyl group, but is presumably restricted to carbohydrates. Involved in the transport of glucose, mannitol, fructose and glycerol (sugars able to support the growth of P.aeruginosa). Facilitates glucose diffusion across the outer membrane.</text>
</comment>
<comment type="subcellular location">
    <subcellularLocation>
        <location>Cell outer membrane</location>
        <topology>Multi-pass membrane protein</topology>
    </subcellularLocation>
</comment>
<comment type="induction">
    <text>By glucose.</text>
</comment>
<comment type="similarity">
    <text evidence="2">Belongs to the OprB family.</text>
</comment>
<feature type="signal peptide" evidence="1">
    <location>
        <begin position="1"/>
        <end position="31"/>
    </location>
</feature>
<feature type="chain" id="PRO_0000025209" description="Porin B">
    <location>
        <begin position="32"/>
        <end position="454"/>
    </location>
</feature>
<sequence>MYKNKKTRPAARTVGCLFALGALGLGSAAHAAEAFSPNSKWMLGDWGGKRTELLEKGYDFKLEYVGEAAANLDGGYDDDKTGRYTDQFALGVHMDLEKILGWKATEFQFTVTERNGKNLSNDRIGDPRAGHISSVQEVWGRGQTWRLTQLWLKQQYFDGALDVKFGRFGEGEDFNSFPCDFQNLAFCGSQVGNWAGSIWYNWPVSQWALRVKYNFAPDWYVQVGAYEQNPSNLETGNGFKMSGSGTKGALLPVELIWQPKVGAEQLPGEYRLGYYYSTAKADDVYDDVDGQPQGLTGNDFKSRGSKHGWWVVAQQQVTSHNGDASRGLSLFANLTVHDKATNVVDNYQQLGVVYKGPFDARPKDDIGLGIARIHVNDDVKKRQRLVNQVNGIDDYDNPLYQPLQDTEYNAELYYGVHVTDWLTVRPNLQYIKQPGGVDEVDNALVAGIKIQTVF</sequence>
<protein>
    <recommendedName>
        <fullName>Porin B</fullName>
    </recommendedName>
    <alternativeName>
        <fullName>Glucose porin</fullName>
    </alternativeName>
    <alternativeName>
        <fullName>Outer membrane protein D1</fullName>
    </alternativeName>
</protein>
<evidence type="ECO:0000269" key="1">
    <source>
    </source>
</evidence>
<evidence type="ECO:0000305" key="2"/>
<keyword id="KW-0998">Cell outer membrane</keyword>
<keyword id="KW-0903">Direct protein sequencing</keyword>
<keyword id="KW-0406">Ion transport</keyword>
<keyword id="KW-0472">Membrane</keyword>
<keyword id="KW-0626">Porin</keyword>
<keyword id="KW-1185">Reference proteome</keyword>
<keyword id="KW-0732">Signal</keyword>
<keyword id="KW-0762">Sugar transport</keyword>
<keyword id="KW-0812">Transmembrane</keyword>
<keyword id="KW-1134">Transmembrane beta strand</keyword>
<keyword id="KW-0813">Transport</keyword>
<gene>
    <name type="primary">oprB</name>
    <name type="ordered locus">PA3186</name>
</gene>
<organism>
    <name type="scientific">Pseudomonas aeruginosa (strain ATCC 15692 / DSM 22644 / CIP 104116 / JCM 14847 / LMG 12228 / 1C / PRS 101 / PAO1)</name>
    <dbReference type="NCBI Taxonomy" id="208964"/>
    <lineage>
        <taxon>Bacteria</taxon>
        <taxon>Pseudomonadati</taxon>
        <taxon>Pseudomonadota</taxon>
        <taxon>Gammaproteobacteria</taxon>
        <taxon>Pseudomonadales</taxon>
        <taxon>Pseudomonadaceae</taxon>
        <taxon>Pseudomonas</taxon>
    </lineage>
</organism>
<name>PORB_PSEAE</name>
<proteinExistence type="evidence at protein level"/>